<feature type="chain" id="PRO_0000203091" description="Putative uncharacterized protein YJR037W">
    <location>
        <begin position="1"/>
        <end position="127"/>
    </location>
</feature>
<feature type="region of interest" description="Disordered" evidence="1">
    <location>
        <begin position="1"/>
        <end position="26"/>
    </location>
</feature>
<feature type="compositionally biased region" description="Polar residues" evidence="1">
    <location>
        <begin position="1"/>
        <end position="13"/>
    </location>
</feature>
<organism>
    <name type="scientific">Saccharomyces cerevisiae (strain ATCC 204508 / S288c)</name>
    <name type="common">Baker's yeast</name>
    <dbReference type="NCBI Taxonomy" id="559292"/>
    <lineage>
        <taxon>Eukaryota</taxon>
        <taxon>Fungi</taxon>
        <taxon>Dikarya</taxon>
        <taxon>Ascomycota</taxon>
        <taxon>Saccharomycotina</taxon>
        <taxon>Saccharomycetes</taxon>
        <taxon>Saccharomycetales</taxon>
        <taxon>Saccharomycetaceae</taxon>
        <taxon>Saccharomyces</taxon>
    </lineage>
</organism>
<name>YJ07_YEAST</name>
<accession>P47105</accession>
<comment type="miscellaneous">
    <text evidence="2">Partially overlaps HUL4.</text>
</comment>
<comment type="caution">
    <text evidence="3">Product of a dubious gene prediction unlikely to encode a functional protein. Because of that it is not part of the S.cerevisiae S288c complete/reference proteome set.</text>
</comment>
<reference key="1">
    <citation type="journal article" date="1995" name="Yeast">
        <title>Analysis of a 42.5 kb DNA sequence of chromosome X reveals three tRNA genes and 14 new open reading frames including a gene most probably belonging to the family of ubiquitin-protein ligases.</title>
        <authorList>
            <person name="Huang M.-E."/>
            <person name="Chuat J.-C."/>
            <person name="Galibert F."/>
        </authorList>
    </citation>
    <scope>NUCLEOTIDE SEQUENCE [GENOMIC DNA]</scope>
    <source>
        <strain>ATCC 204508 / S288c</strain>
    </source>
</reference>
<reference key="2">
    <citation type="journal article" date="1996" name="EMBO J.">
        <title>Complete nucleotide sequence of Saccharomyces cerevisiae chromosome X.</title>
        <authorList>
            <person name="Galibert F."/>
            <person name="Alexandraki D."/>
            <person name="Baur A."/>
            <person name="Boles E."/>
            <person name="Chalwatzis N."/>
            <person name="Chuat J.-C."/>
            <person name="Coster F."/>
            <person name="Cziepluch C."/>
            <person name="de Haan M."/>
            <person name="Domdey H."/>
            <person name="Durand P."/>
            <person name="Entian K.-D."/>
            <person name="Gatius M."/>
            <person name="Goffeau A."/>
            <person name="Grivell L.A."/>
            <person name="Hennemann A."/>
            <person name="Herbert C.J."/>
            <person name="Heumann K."/>
            <person name="Hilger F."/>
            <person name="Hollenberg C.P."/>
            <person name="Huang M.-E."/>
            <person name="Jacq C."/>
            <person name="Jauniaux J.-C."/>
            <person name="Katsoulou C."/>
            <person name="Kirchrath L."/>
            <person name="Kleine K."/>
            <person name="Kordes E."/>
            <person name="Koetter P."/>
            <person name="Liebl S."/>
            <person name="Louis E.J."/>
            <person name="Manus V."/>
            <person name="Mewes H.-W."/>
            <person name="Miosga T."/>
            <person name="Obermaier B."/>
            <person name="Perea J."/>
            <person name="Pohl T.M."/>
            <person name="Portetelle D."/>
            <person name="Pujol A."/>
            <person name="Purnelle B."/>
            <person name="Ramezani Rad M."/>
            <person name="Rasmussen S.W."/>
            <person name="Rose M."/>
            <person name="Rossau R."/>
            <person name="Schaaff-Gerstenschlaeger I."/>
            <person name="Smits P.H.M."/>
            <person name="Scarcez T."/>
            <person name="Soriano N."/>
            <person name="To Van D."/>
            <person name="Tzermia M."/>
            <person name="Van Broekhoven A."/>
            <person name="Vandenbol M."/>
            <person name="Wedler H."/>
            <person name="von Wettstein D."/>
            <person name="Wambutt R."/>
            <person name="Zagulski M."/>
            <person name="Zollner A."/>
            <person name="Karpfinger-Hartl L."/>
        </authorList>
    </citation>
    <scope>NUCLEOTIDE SEQUENCE [LARGE SCALE GENOMIC DNA]</scope>
    <source>
        <strain>ATCC 204508 / S288c</strain>
    </source>
</reference>
<reference key="3">
    <citation type="journal article" date="2014" name="G3 (Bethesda)">
        <title>The reference genome sequence of Saccharomyces cerevisiae: Then and now.</title>
        <authorList>
            <person name="Engel S.R."/>
            <person name="Dietrich F.S."/>
            <person name="Fisk D.G."/>
            <person name="Binkley G."/>
            <person name="Balakrishnan R."/>
            <person name="Costanzo M.C."/>
            <person name="Dwight S.S."/>
            <person name="Hitz B.C."/>
            <person name="Karra K."/>
            <person name="Nash R.S."/>
            <person name="Weng S."/>
            <person name="Wong E.D."/>
            <person name="Lloyd P."/>
            <person name="Skrzypek M.S."/>
            <person name="Miyasato S.R."/>
            <person name="Simison M."/>
            <person name="Cherry J.M."/>
        </authorList>
    </citation>
    <scope>GENOME REANNOTATION</scope>
    <source>
        <strain>ATCC 204508 / S288c</strain>
    </source>
</reference>
<protein>
    <recommendedName>
        <fullName>Putative uncharacterized protein YJR037W</fullName>
    </recommendedName>
</protein>
<gene>
    <name type="ordered locus">YJR037W</name>
    <name type="ORF">J1610</name>
</gene>
<dbReference type="EMBL" id="L36344">
    <property type="protein sequence ID" value="AAA88739.1"/>
    <property type="molecule type" value="Genomic_DNA"/>
</dbReference>
<dbReference type="EMBL" id="Z49536">
    <property type="protein sequence ID" value="CAA89564.1"/>
    <property type="molecule type" value="Genomic_DNA"/>
</dbReference>
<dbReference type="PIR" id="S57056">
    <property type="entry name" value="S57056"/>
</dbReference>
<dbReference type="DIP" id="DIP-4302N"/>
<dbReference type="STRING" id="4932.YJR037W"/>
<dbReference type="PaxDb" id="4932-YJR037W"/>
<dbReference type="EnsemblFungi" id="YJR037W_mRNA">
    <property type="protein sequence ID" value="YJR037W"/>
    <property type="gene ID" value="YJR037W"/>
</dbReference>
<dbReference type="AGR" id="SGD:S000003798"/>
<dbReference type="SGD" id="S000003798">
    <property type="gene designation" value="YJR037W"/>
</dbReference>
<dbReference type="HOGENOM" id="CLU_1972191_0_0_1"/>
<evidence type="ECO:0000256" key="1">
    <source>
        <dbReference type="SAM" id="MobiDB-lite"/>
    </source>
</evidence>
<evidence type="ECO:0000305" key="2"/>
<evidence type="ECO:0000305" key="3">
    <source>
    </source>
</evidence>
<proteinExistence type="uncertain"/>
<sequence length="127" mass="14404">MEAGNRSGTPQHRQLSEIRQDLSSSPDTDAEEFRLLLLLFEQLPSFTLAAKDRSDVRLPDLGNLFLVWATECDSNSFDTDPSLPSFFALSLSNKETISYFTLPISRSIREIYLVNFTNALKNMYFSA</sequence>